<evidence type="ECO:0000255" key="1">
    <source>
        <dbReference type="HAMAP-Rule" id="MF_01438"/>
    </source>
</evidence>
<evidence type="ECO:0000255" key="2">
    <source>
        <dbReference type="PROSITE-ProRule" id="PRU01130"/>
    </source>
</evidence>
<gene>
    <name evidence="1" type="primary">disA</name>
    <name type="ordered locus">BCA_0112</name>
</gene>
<comment type="function">
    <text evidence="1">Participates in a DNA-damage check-point that is active prior to asymmetric division when DNA is damaged. DisA forms globular foci that rapidly scan along the chromosomes during sporulation, searching for lesions. When a lesion is present, DisA pauses at the lesion site. This triggers a cellular response that culminates in a temporary block in sporulation initiation.</text>
</comment>
<comment type="function">
    <text evidence="1">Also has diadenylate cyclase activity, catalyzing the condensation of 2 ATP molecules into cyclic di-AMP (c-di-AMP). c-di-AMP acts as a signaling molecule that couples DNA integrity with progression of sporulation. The rise in c-di-AMP level generated by DisA while scanning the chromosome, operates as a positive signal that advances sporulation; upon encountering a lesion, the DisA focus arrests at the damaged site and halts c-di-AMP synthesis.</text>
</comment>
<comment type="catalytic activity">
    <reaction evidence="1">
        <text>2 ATP = 3',3'-c-di-AMP + 2 diphosphate</text>
        <dbReference type="Rhea" id="RHEA:35655"/>
        <dbReference type="ChEBI" id="CHEBI:30616"/>
        <dbReference type="ChEBI" id="CHEBI:33019"/>
        <dbReference type="ChEBI" id="CHEBI:71500"/>
        <dbReference type="EC" id="2.7.7.85"/>
    </reaction>
</comment>
<comment type="cofactor">
    <cofactor evidence="1">
        <name>Mg(2+)</name>
        <dbReference type="ChEBI" id="CHEBI:18420"/>
    </cofactor>
</comment>
<comment type="subunit">
    <text evidence="1">Homooctamer.</text>
</comment>
<comment type="similarity">
    <text evidence="1">Belongs to the DisA family.</text>
</comment>
<name>DISA_BACC3</name>
<organism>
    <name type="scientific">Bacillus cereus (strain 03BB102)</name>
    <dbReference type="NCBI Taxonomy" id="572264"/>
    <lineage>
        <taxon>Bacteria</taxon>
        <taxon>Bacillati</taxon>
        <taxon>Bacillota</taxon>
        <taxon>Bacilli</taxon>
        <taxon>Bacillales</taxon>
        <taxon>Bacillaceae</taxon>
        <taxon>Bacillus</taxon>
        <taxon>Bacillus cereus group</taxon>
    </lineage>
</organism>
<dbReference type="EC" id="2.7.7.85" evidence="1"/>
<dbReference type="EMBL" id="CP001407">
    <property type="protein sequence ID" value="ACO28710.1"/>
    <property type="molecule type" value="Genomic_DNA"/>
</dbReference>
<dbReference type="RefSeq" id="WP_000392168.1">
    <property type="nucleotide sequence ID" value="NZ_CP009318.1"/>
</dbReference>
<dbReference type="SMR" id="C1ET13"/>
<dbReference type="GeneID" id="93010970"/>
<dbReference type="KEGG" id="bcx:BCA_0112"/>
<dbReference type="PATRIC" id="fig|572264.18.peg.148"/>
<dbReference type="Proteomes" id="UP000002210">
    <property type="component" value="Chromosome"/>
</dbReference>
<dbReference type="GO" id="GO:0004016">
    <property type="term" value="F:adenylate cyclase activity"/>
    <property type="evidence" value="ECO:0007669"/>
    <property type="project" value="TreeGrafter"/>
</dbReference>
<dbReference type="GO" id="GO:0005524">
    <property type="term" value="F:ATP binding"/>
    <property type="evidence" value="ECO:0007669"/>
    <property type="project" value="UniProtKB-UniRule"/>
</dbReference>
<dbReference type="GO" id="GO:0106408">
    <property type="term" value="F:diadenylate cyclase activity"/>
    <property type="evidence" value="ECO:0007669"/>
    <property type="project" value="UniProtKB-EC"/>
</dbReference>
<dbReference type="GO" id="GO:0003677">
    <property type="term" value="F:DNA binding"/>
    <property type="evidence" value="ECO:0007669"/>
    <property type="project" value="UniProtKB-UniRule"/>
</dbReference>
<dbReference type="GO" id="GO:0006281">
    <property type="term" value="P:DNA repair"/>
    <property type="evidence" value="ECO:0007669"/>
    <property type="project" value="UniProtKB-UniRule"/>
</dbReference>
<dbReference type="FunFam" id="1.10.150.20:FF:000023">
    <property type="entry name" value="DNA integrity scanning protein DisA"/>
    <property type="match status" value="1"/>
</dbReference>
<dbReference type="FunFam" id="1.20.1260.110:FF:000001">
    <property type="entry name" value="DNA integrity scanning protein DisA"/>
    <property type="match status" value="1"/>
</dbReference>
<dbReference type="FunFam" id="3.40.1700.10:FF:000001">
    <property type="entry name" value="DNA integrity scanning protein DisA"/>
    <property type="match status" value="1"/>
</dbReference>
<dbReference type="Gene3D" id="1.10.150.20">
    <property type="entry name" value="5' to 3' exonuclease, C-terminal subdomain"/>
    <property type="match status" value="1"/>
</dbReference>
<dbReference type="Gene3D" id="1.20.1260.110">
    <property type="entry name" value="DNA integrity scanning linker region"/>
    <property type="match status" value="1"/>
</dbReference>
<dbReference type="Gene3D" id="3.40.1700.10">
    <property type="entry name" value="DNA integrity scanning protein, DisA, N-terminal domain"/>
    <property type="match status" value="1"/>
</dbReference>
<dbReference type="HAMAP" id="MF_01438">
    <property type="entry name" value="DisA"/>
    <property type="match status" value="1"/>
</dbReference>
<dbReference type="InterPro" id="IPR050338">
    <property type="entry name" value="DisA"/>
</dbReference>
<dbReference type="InterPro" id="IPR038331">
    <property type="entry name" value="DisA_sf"/>
</dbReference>
<dbReference type="InterPro" id="IPR036888">
    <property type="entry name" value="DNA_integrity_DisA_N_sf"/>
</dbReference>
<dbReference type="InterPro" id="IPR018906">
    <property type="entry name" value="DNA_integrity_scan_DisA_link"/>
</dbReference>
<dbReference type="InterPro" id="IPR003390">
    <property type="entry name" value="DNA_integrity_scan_DisA_N"/>
</dbReference>
<dbReference type="InterPro" id="IPR023763">
    <property type="entry name" value="DNA_integrity_scanning_protein"/>
</dbReference>
<dbReference type="InterPro" id="IPR010994">
    <property type="entry name" value="RuvA_2-like"/>
</dbReference>
<dbReference type="NCBIfam" id="NF010009">
    <property type="entry name" value="PRK13482.1"/>
    <property type="match status" value="1"/>
</dbReference>
<dbReference type="PANTHER" id="PTHR34185">
    <property type="entry name" value="DIADENYLATE CYCLASE"/>
    <property type="match status" value="1"/>
</dbReference>
<dbReference type="PANTHER" id="PTHR34185:SF3">
    <property type="entry name" value="DNA INTEGRITY SCANNING PROTEIN DISA"/>
    <property type="match status" value="1"/>
</dbReference>
<dbReference type="Pfam" id="PF02457">
    <property type="entry name" value="DAC"/>
    <property type="match status" value="1"/>
</dbReference>
<dbReference type="Pfam" id="PF10635">
    <property type="entry name" value="DisA-linker"/>
    <property type="match status" value="1"/>
</dbReference>
<dbReference type="SUPFAM" id="SSF47781">
    <property type="entry name" value="RuvA domain 2-like"/>
    <property type="match status" value="1"/>
</dbReference>
<dbReference type="SUPFAM" id="SSF143597">
    <property type="entry name" value="YojJ-like"/>
    <property type="match status" value="1"/>
</dbReference>
<dbReference type="PROSITE" id="PS51794">
    <property type="entry name" value="DAC"/>
    <property type="match status" value="1"/>
</dbReference>
<reference key="1">
    <citation type="submission" date="2009-02" db="EMBL/GenBank/DDBJ databases">
        <title>Genome sequence of Bacillus cereus 03BB102.</title>
        <authorList>
            <person name="Dodson R.J."/>
            <person name="Jackson P."/>
            <person name="Munk A.C."/>
            <person name="Brettin T."/>
            <person name="Bruce D."/>
            <person name="Detter C."/>
            <person name="Tapia R."/>
            <person name="Han C."/>
            <person name="Sutton G."/>
            <person name="Sims D."/>
        </authorList>
    </citation>
    <scope>NUCLEOTIDE SEQUENCE [LARGE SCALE GENOMIC DNA]</scope>
    <source>
        <strain>03BB102</strain>
    </source>
</reference>
<protein>
    <recommendedName>
        <fullName evidence="1">DNA integrity scanning protein DisA</fullName>
    </recommendedName>
    <alternativeName>
        <fullName evidence="1">Cyclic di-AMP synthase</fullName>
        <shortName evidence="1">c-di-AMP synthase</shortName>
    </alternativeName>
    <alternativeName>
        <fullName evidence="1">Diadenylate cyclase</fullName>
        <ecNumber evidence="1">2.7.7.85</ecNumber>
    </alternativeName>
</protein>
<accession>C1ET13</accession>
<proteinExistence type="inferred from homology"/>
<keyword id="KW-0067">ATP-binding</keyword>
<keyword id="KW-0227">DNA damage</keyword>
<keyword id="KW-0234">DNA repair</keyword>
<keyword id="KW-0238">DNA-binding</keyword>
<keyword id="KW-0460">Magnesium</keyword>
<keyword id="KW-0547">Nucleotide-binding</keyword>
<keyword id="KW-0548">Nucleotidyltransferase</keyword>
<keyword id="KW-0808">Transferase</keyword>
<sequence length="357" mass="40095">MEENKQRVKSMINILQLVAPGTPLREGIDNVLRAQTGGLIVLGYNEQIKSIVDGGFHINCAFSPASLYELAKMDGALILNETGSKILIANAQLVPESSIDSIETGMRHRTAERVAKQTGSLVVAISQRRNVITLYQGNLRYTLKDIGVILTKANQAIQTLEKYKAVWNDGITNLGILEFEEVVTMSEVVHVLHSVEMVLRIKNEILSYIHELGTEGRLIRLQLTELLADLEAEAALLIKDYYQEKTQDHHQILKKLQELANTQLLEDSDLVKLLGYPGQTSLEESVTPRGYRITSKISRVPPLIIENLINRFKTLQGVCRATINELDDVEGIGEVRAKKIREGLKRIQEHLYMSRHN</sequence>
<feature type="chain" id="PRO_1000184909" description="DNA integrity scanning protein DisA">
    <location>
        <begin position="1"/>
        <end position="357"/>
    </location>
</feature>
<feature type="domain" description="DAC" evidence="2">
    <location>
        <begin position="8"/>
        <end position="146"/>
    </location>
</feature>
<feature type="binding site" evidence="1">
    <location>
        <position position="75"/>
    </location>
    <ligand>
        <name>ATP</name>
        <dbReference type="ChEBI" id="CHEBI:30616"/>
    </ligand>
</feature>
<feature type="binding site" evidence="1">
    <location>
        <position position="93"/>
    </location>
    <ligand>
        <name>ATP</name>
        <dbReference type="ChEBI" id="CHEBI:30616"/>
    </ligand>
</feature>
<feature type="binding site" evidence="1">
    <location>
        <begin position="106"/>
        <end position="110"/>
    </location>
    <ligand>
        <name>ATP</name>
        <dbReference type="ChEBI" id="CHEBI:30616"/>
    </ligand>
</feature>